<name>DAB1_MOUSE</name>
<sequence length="588" mass="63578">MSTETELQVAVKTSAKKDSRKKGQDRSEATLIKRFKGEGVRYKAKLIGIDEVSAARGDKLCQDSMMKLKGVVAGARSKGEHKQKIFLTISFGGIKIFDEKTGALQHHHAVHEISYIAKDITDHRAFGYVCGKEGNHRFVAIKTAQAAEPVILDLRDLFQLIYELKQREELEKKAQKDKQCEQAVYQTILEEDVEDPVYQYIVFEAGHEPIRDPETEENIYQVPTSQKKEGVYDVPKSQPNSQPLEDFESRFAAATPNRNLSMDFDELLEATKVSAVTQLELFGDMSTPPDITSPPTPATPGDAFLPSSSQTLPGSADVFGSMSFGTAAVPSGYVAMGAVLPSFWGQQPLVQQQIAMGAQPPVAQVIPGAQPIAWGQPGLFPATQQAWPTVAGQFPPAAFMPTQTVMPLAAAMFQGPLTPLATVPGTNDSARSSPQSDKPRQKMGKESFKDFQMVQPPPVPSRKPDQPSLTCTSEAFSSYFNKVGVAQDTDDCDDFDISQLNLTPVTSTTPSTNSPPTPAPRQSSPSKSSASHVSDPTADDIFEEGFESPSKSEEQEAPDGSQASSTSDPFGEPSGEPSGDNISPQDGS</sequence>
<gene>
    <name evidence="20 22" type="primary">Dab1</name>
</gene>
<dbReference type="EMBL" id="Y08380">
    <property type="protein sequence ID" value="CAA69663.1"/>
    <property type="molecule type" value="mRNA"/>
</dbReference>
<dbReference type="EMBL" id="Y08379">
    <property type="protein sequence ID" value="CAA69662.1"/>
    <property type="molecule type" value="mRNA"/>
</dbReference>
<dbReference type="EMBL" id="Y08381">
    <property type="protein sequence ID" value="CAA69664.1"/>
    <property type="molecule type" value="mRNA"/>
</dbReference>
<dbReference type="EMBL" id="Y08383">
    <property type="status" value="NOT_ANNOTATED_CDS"/>
    <property type="molecule type" value="Genomic_DNA"/>
</dbReference>
<dbReference type="EMBL" id="AK005640">
    <property type="protein sequence ID" value="BAB24163.1"/>
    <property type="molecule type" value="mRNA"/>
</dbReference>
<dbReference type="EMBL" id="AL627134">
    <property type="protein sequence ID" value="CAM26758.1"/>
    <property type="molecule type" value="Genomic_DNA"/>
</dbReference>
<dbReference type="EMBL" id="AL645483">
    <property type="protein sequence ID" value="CAM26758.1"/>
    <property type="status" value="JOINED"/>
    <property type="molecule type" value="Genomic_DNA"/>
</dbReference>
<dbReference type="EMBL" id="AL627134">
    <property type="protein sequence ID" value="CAM26759.1"/>
    <property type="molecule type" value="Genomic_DNA"/>
</dbReference>
<dbReference type="EMBL" id="AL645483">
    <property type="protein sequence ID" value="CAM26759.1"/>
    <property type="status" value="JOINED"/>
    <property type="molecule type" value="Genomic_DNA"/>
</dbReference>
<dbReference type="EMBL" id="AL669938">
    <property type="protein sequence ID" value="CAM26759.1"/>
    <property type="status" value="JOINED"/>
    <property type="molecule type" value="Genomic_DNA"/>
</dbReference>
<dbReference type="EMBL" id="AL627134">
    <property type="protein sequence ID" value="CAM26760.1"/>
    <property type="molecule type" value="Genomic_DNA"/>
</dbReference>
<dbReference type="EMBL" id="AL645483">
    <property type="protein sequence ID" value="CAM26760.1"/>
    <property type="status" value="JOINED"/>
    <property type="molecule type" value="Genomic_DNA"/>
</dbReference>
<dbReference type="EMBL" id="AL669938">
    <property type="protein sequence ID" value="CAM26760.1"/>
    <property type="status" value="JOINED"/>
    <property type="molecule type" value="Genomic_DNA"/>
</dbReference>
<dbReference type="EMBL" id="AL627134">
    <property type="protein sequence ID" value="CAM26762.1"/>
    <property type="molecule type" value="Genomic_DNA"/>
</dbReference>
<dbReference type="EMBL" id="AL645483">
    <property type="protein sequence ID" value="CAM26762.1"/>
    <property type="status" value="JOINED"/>
    <property type="molecule type" value="Genomic_DNA"/>
</dbReference>
<dbReference type="EMBL" id="AL669938">
    <property type="protein sequence ID" value="CAM26762.1"/>
    <property type="status" value="JOINED"/>
    <property type="molecule type" value="Genomic_DNA"/>
</dbReference>
<dbReference type="EMBL" id="AL627134">
    <property type="protein sequence ID" value="CAM26765.1"/>
    <property type="molecule type" value="Genomic_DNA"/>
</dbReference>
<dbReference type="EMBL" id="AL645483">
    <property type="protein sequence ID" value="CAM26765.1"/>
    <property type="status" value="JOINED"/>
    <property type="molecule type" value="Genomic_DNA"/>
</dbReference>
<dbReference type="EMBL" id="AL669938">
    <property type="protein sequence ID" value="CAM26765.1"/>
    <property type="status" value="JOINED"/>
    <property type="molecule type" value="Genomic_DNA"/>
</dbReference>
<dbReference type="EMBL" id="AL645483">
    <property type="protein sequence ID" value="CAM17685.1"/>
    <property type="molecule type" value="Genomic_DNA"/>
</dbReference>
<dbReference type="EMBL" id="AL627134">
    <property type="protein sequence ID" value="CAM17685.1"/>
    <property type="status" value="JOINED"/>
    <property type="molecule type" value="Genomic_DNA"/>
</dbReference>
<dbReference type="EMBL" id="AL645483">
    <property type="protein sequence ID" value="CAM17686.1"/>
    <property type="molecule type" value="Genomic_DNA"/>
</dbReference>
<dbReference type="EMBL" id="AL627134">
    <property type="protein sequence ID" value="CAM17686.1"/>
    <property type="status" value="JOINED"/>
    <property type="molecule type" value="Genomic_DNA"/>
</dbReference>
<dbReference type="EMBL" id="AL669938">
    <property type="protein sequence ID" value="CAM17686.1"/>
    <property type="status" value="JOINED"/>
    <property type="molecule type" value="Genomic_DNA"/>
</dbReference>
<dbReference type="EMBL" id="AL645483">
    <property type="protein sequence ID" value="CAM17687.1"/>
    <property type="molecule type" value="Genomic_DNA"/>
</dbReference>
<dbReference type="EMBL" id="AL627134">
    <property type="protein sequence ID" value="CAM17687.1"/>
    <property type="status" value="JOINED"/>
    <property type="molecule type" value="Genomic_DNA"/>
</dbReference>
<dbReference type="EMBL" id="AL669938">
    <property type="protein sequence ID" value="CAM17687.1"/>
    <property type="status" value="JOINED"/>
    <property type="molecule type" value="Genomic_DNA"/>
</dbReference>
<dbReference type="EMBL" id="AL645483">
    <property type="protein sequence ID" value="CAM17689.1"/>
    <property type="molecule type" value="Genomic_DNA"/>
</dbReference>
<dbReference type="EMBL" id="AL627134">
    <property type="protein sequence ID" value="CAM17689.1"/>
    <property type="status" value="JOINED"/>
    <property type="molecule type" value="Genomic_DNA"/>
</dbReference>
<dbReference type="EMBL" id="AL669938">
    <property type="protein sequence ID" value="CAM17689.1"/>
    <property type="status" value="JOINED"/>
    <property type="molecule type" value="Genomic_DNA"/>
</dbReference>
<dbReference type="EMBL" id="AL645483">
    <property type="protein sequence ID" value="CAM17690.1"/>
    <property type="molecule type" value="Genomic_DNA"/>
</dbReference>
<dbReference type="EMBL" id="AL627134">
    <property type="protein sequence ID" value="CAM17690.1"/>
    <property type="status" value="JOINED"/>
    <property type="molecule type" value="Genomic_DNA"/>
</dbReference>
<dbReference type="EMBL" id="AL669938">
    <property type="protein sequence ID" value="CAM17690.1"/>
    <property type="status" value="JOINED"/>
    <property type="molecule type" value="Genomic_DNA"/>
</dbReference>
<dbReference type="EMBL" id="AL669938">
    <property type="protein sequence ID" value="CAM19059.1"/>
    <property type="molecule type" value="Genomic_DNA"/>
</dbReference>
<dbReference type="EMBL" id="AL627134">
    <property type="protein sequence ID" value="CAM19059.1"/>
    <property type="status" value="JOINED"/>
    <property type="molecule type" value="Genomic_DNA"/>
</dbReference>
<dbReference type="EMBL" id="AL645483">
    <property type="protein sequence ID" value="CAM19059.1"/>
    <property type="status" value="JOINED"/>
    <property type="molecule type" value="Genomic_DNA"/>
</dbReference>
<dbReference type="EMBL" id="AL669938">
    <property type="protein sequence ID" value="CAM19060.1"/>
    <property type="molecule type" value="Genomic_DNA"/>
</dbReference>
<dbReference type="EMBL" id="AL627134">
    <property type="protein sequence ID" value="CAM19060.1"/>
    <property type="status" value="JOINED"/>
    <property type="molecule type" value="Genomic_DNA"/>
</dbReference>
<dbReference type="EMBL" id="AL645483">
    <property type="protein sequence ID" value="CAM19060.1"/>
    <property type="status" value="JOINED"/>
    <property type="molecule type" value="Genomic_DNA"/>
</dbReference>
<dbReference type="EMBL" id="AL669938">
    <property type="protein sequence ID" value="CAM19062.1"/>
    <property type="molecule type" value="Genomic_DNA"/>
</dbReference>
<dbReference type="EMBL" id="AL627134">
    <property type="protein sequence ID" value="CAM19062.1"/>
    <property type="status" value="JOINED"/>
    <property type="molecule type" value="Genomic_DNA"/>
</dbReference>
<dbReference type="EMBL" id="AL645483">
    <property type="protein sequence ID" value="CAM19062.1"/>
    <property type="status" value="JOINED"/>
    <property type="molecule type" value="Genomic_DNA"/>
</dbReference>
<dbReference type="EMBL" id="AL669938">
    <property type="protein sequence ID" value="CAM19063.1"/>
    <property type="molecule type" value="Genomic_DNA"/>
</dbReference>
<dbReference type="EMBL" id="AL627134">
    <property type="protein sequence ID" value="CAM19063.1"/>
    <property type="status" value="JOINED"/>
    <property type="molecule type" value="Genomic_DNA"/>
</dbReference>
<dbReference type="EMBL" id="AL645483">
    <property type="protein sequence ID" value="CAM19063.1"/>
    <property type="status" value="JOINED"/>
    <property type="molecule type" value="Genomic_DNA"/>
</dbReference>
<dbReference type="CCDS" id="CCDS18413.1">
    <molecule id="P97318-2"/>
</dbReference>
<dbReference type="CCDS" id="CCDS89790.1">
    <molecule id="P97318-5"/>
</dbReference>
<dbReference type="RefSeq" id="NP_001355975.1">
    <molecule id="P97318-2"/>
    <property type="nucleotide sequence ID" value="NM_001369046.1"/>
</dbReference>
<dbReference type="RefSeq" id="NP_001355976.1">
    <molecule id="P97318-2"/>
    <property type="nucleotide sequence ID" value="NM_001369047.1"/>
</dbReference>
<dbReference type="RefSeq" id="NP_001355977.1">
    <molecule id="P97318-5"/>
    <property type="nucleotide sequence ID" value="NM_001369048.1"/>
</dbReference>
<dbReference type="RefSeq" id="NP_034144.1">
    <molecule id="P97318-6"/>
    <property type="nucleotide sequence ID" value="NM_010014.3"/>
</dbReference>
<dbReference type="RefSeq" id="NP_796233.2">
    <molecule id="P97318-2"/>
    <property type="nucleotide sequence ID" value="NM_177259.4"/>
</dbReference>
<dbReference type="RefSeq" id="XP_011238731.1">
    <property type="nucleotide sequence ID" value="XM_011240429.2"/>
</dbReference>
<dbReference type="RefSeq" id="XP_030109030.1">
    <molecule id="P97318-2"/>
    <property type="nucleotide sequence ID" value="XM_030253170.2"/>
</dbReference>
<dbReference type="RefSeq" id="XP_030109040.1">
    <molecule id="P97318-5"/>
    <property type="nucleotide sequence ID" value="XM_030253180.2"/>
</dbReference>
<dbReference type="RefSeq" id="XP_030109042.1">
    <molecule id="P97318-5"/>
    <property type="nucleotide sequence ID" value="XM_030253182.2"/>
</dbReference>
<dbReference type="RefSeq" id="XP_036019533.1">
    <molecule id="P97318-2"/>
    <property type="nucleotide sequence ID" value="XM_036163640.1"/>
</dbReference>
<dbReference type="RefSeq" id="XP_036019538.1">
    <molecule id="P97318-5"/>
    <property type="nucleotide sequence ID" value="XM_036163645.1"/>
</dbReference>
<dbReference type="PDB" id="1NTV">
    <property type="method" value="X-ray"/>
    <property type="resolution" value="1.50 A"/>
    <property type="chains" value="A=23-174"/>
</dbReference>
<dbReference type="PDB" id="1NU2">
    <property type="method" value="X-ray"/>
    <property type="resolution" value="1.90 A"/>
    <property type="chains" value="A=23-174"/>
</dbReference>
<dbReference type="PDB" id="1OQN">
    <property type="method" value="X-ray"/>
    <property type="resolution" value="2.30 A"/>
    <property type="chains" value="A/B=25-183"/>
</dbReference>
<dbReference type="PDBsum" id="1NTV"/>
<dbReference type="PDBsum" id="1NU2"/>
<dbReference type="PDBsum" id="1OQN"/>
<dbReference type="SMR" id="P97318"/>
<dbReference type="BioGRID" id="199042">
    <property type="interactions" value="30"/>
</dbReference>
<dbReference type="DIP" id="DIP-30902N"/>
<dbReference type="ELM" id="P97318"/>
<dbReference type="FunCoup" id="P97318">
    <property type="interactions" value="492"/>
</dbReference>
<dbReference type="IntAct" id="P97318">
    <property type="interactions" value="18"/>
</dbReference>
<dbReference type="MINT" id="P97318"/>
<dbReference type="STRING" id="10090.ENSMUSP00000102443"/>
<dbReference type="GlyGen" id="P97318">
    <property type="glycosylation" value="5 sites"/>
</dbReference>
<dbReference type="iPTMnet" id="P97318"/>
<dbReference type="PhosphoSitePlus" id="P97318"/>
<dbReference type="PaxDb" id="10090-ENSMUSP00000102443"/>
<dbReference type="ProteomicsDB" id="279264">
    <molecule id="P97318-1"/>
</dbReference>
<dbReference type="ProteomicsDB" id="279265">
    <molecule id="P97318-4"/>
</dbReference>
<dbReference type="ProteomicsDB" id="279266">
    <molecule id="P97318-5"/>
</dbReference>
<dbReference type="ProteomicsDB" id="279267">
    <molecule id="P97318-6"/>
</dbReference>
<dbReference type="ProteomicsDB" id="279268">
    <molecule id="P97318-3"/>
</dbReference>
<dbReference type="ProteomicsDB" id="279269">
    <molecule id="P97318-8"/>
</dbReference>
<dbReference type="ProteomicsDB" id="279270">
    <molecule id="P97318-2"/>
</dbReference>
<dbReference type="Antibodypedia" id="19377">
    <property type="antibodies" value="500 antibodies from 35 providers"/>
</dbReference>
<dbReference type="DNASU" id="13131"/>
<dbReference type="Ensembl" id="ENSMUST00000106826.8">
    <molecule id="P97318-4"/>
    <property type="protein sequence ID" value="ENSMUSP00000102439.2"/>
    <property type="gene ID" value="ENSMUSG00000028519.17"/>
</dbReference>
<dbReference type="Ensembl" id="ENSMUST00000106827.8">
    <molecule id="P97318-5"/>
    <property type="protein sequence ID" value="ENSMUSP00000102440.2"/>
    <property type="gene ID" value="ENSMUSG00000028519.17"/>
</dbReference>
<dbReference type="Ensembl" id="ENSMUST00000106830.9">
    <molecule id="P97318-2"/>
    <property type="protein sequence ID" value="ENSMUSP00000102443.3"/>
    <property type="gene ID" value="ENSMUSG00000028519.17"/>
</dbReference>
<dbReference type="GeneID" id="13131"/>
<dbReference type="KEGG" id="mmu:13131"/>
<dbReference type="UCSC" id="uc008txu.1">
    <molecule id="P97318-5"/>
    <property type="organism name" value="mouse"/>
</dbReference>
<dbReference type="UCSC" id="uc008txv.2">
    <molecule id="P97318-6"/>
    <property type="organism name" value="mouse"/>
</dbReference>
<dbReference type="AGR" id="MGI:108554"/>
<dbReference type="CTD" id="1600"/>
<dbReference type="MGI" id="MGI:108554">
    <property type="gene designation" value="Dab1"/>
</dbReference>
<dbReference type="VEuPathDB" id="HostDB:ENSMUSG00000028519"/>
<dbReference type="eggNOG" id="KOG3535">
    <property type="taxonomic scope" value="Eukaryota"/>
</dbReference>
<dbReference type="GeneTree" id="ENSGT00940000158038"/>
<dbReference type="HOGENOM" id="CLU_020747_2_0_1"/>
<dbReference type="InParanoid" id="P97318"/>
<dbReference type="OMA" id="FDEKTGX"/>
<dbReference type="OrthoDB" id="10069833at2759"/>
<dbReference type="PhylomeDB" id="P97318"/>
<dbReference type="TreeFam" id="TF316724"/>
<dbReference type="Reactome" id="R-MMU-8866376">
    <property type="pathway name" value="Reelin signalling pathway"/>
</dbReference>
<dbReference type="BioGRID-ORCS" id="13131">
    <property type="hits" value="3 hits in 79 CRISPR screens"/>
</dbReference>
<dbReference type="ChiTaRS" id="Dab1">
    <property type="organism name" value="mouse"/>
</dbReference>
<dbReference type="EvolutionaryTrace" id="P97318"/>
<dbReference type="PRO" id="PR:P97318"/>
<dbReference type="Proteomes" id="UP000000589">
    <property type="component" value="Chromosome 4"/>
</dbReference>
<dbReference type="RNAct" id="P97318">
    <property type="molecule type" value="protein"/>
</dbReference>
<dbReference type="Bgee" id="ENSMUSG00000028519">
    <property type="expression patterns" value="Expressed in cortical plate and 219 other cell types or tissues"/>
</dbReference>
<dbReference type="ExpressionAtlas" id="P97318">
    <property type="expression patterns" value="baseline and differential"/>
</dbReference>
<dbReference type="GO" id="GO:0005737">
    <property type="term" value="C:cytoplasm"/>
    <property type="evidence" value="ECO:0000314"/>
    <property type="project" value="UniProtKB"/>
</dbReference>
<dbReference type="GO" id="GO:0098978">
    <property type="term" value="C:glutamatergic synapse"/>
    <property type="evidence" value="ECO:0000314"/>
    <property type="project" value="SynGO"/>
</dbReference>
<dbReference type="GO" id="GO:0043231">
    <property type="term" value="C:intracellular membrane-bounded organelle"/>
    <property type="evidence" value="ECO:0007669"/>
    <property type="project" value="Ensembl"/>
</dbReference>
<dbReference type="GO" id="GO:0048471">
    <property type="term" value="C:perinuclear region of cytoplasm"/>
    <property type="evidence" value="ECO:0000316"/>
    <property type="project" value="MGI"/>
</dbReference>
<dbReference type="GO" id="GO:0045202">
    <property type="term" value="C:synapse"/>
    <property type="evidence" value="ECO:0000314"/>
    <property type="project" value="SynGO"/>
</dbReference>
<dbReference type="GO" id="GO:0005543">
    <property type="term" value="F:phospholipid binding"/>
    <property type="evidence" value="ECO:0000304"/>
    <property type="project" value="UniProtKB"/>
</dbReference>
<dbReference type="GO" id="GO:0042169">
    <property type="term" value="F:SH2 domain binding"/>
    <property type="evidence" value="ECO:0000304"/>
    <property type="project" value="UniProtKB"/>
</dbReference>
<dbReference type="GO" id="GO:0035591">
    <property type="term" value="F:signaling adaptor activity"/>
    <property type="evidence" value="ECO:0000314"/>
    <property type="project" value="UniProtKB"/>
</dbReference>
<dbReference type="GO" id="GO:0007628">
    <property type="term" value="P:adult walking behavior"/>
    <property type="evidence" value="ECO:0000315"/>
    <property type="project" value="MGI"/>
</dbReference>
<dbReference type="GO" id="GO:0048708">
    <property type="term" value="P:astrocyte differentiation"/>
    <property type="evidence" value="ECO:0000315"/>
    <property type="project" value="MGI"/>
</dbReference>
<dbReference type="GO" id="GO:0007409">
    <property type="term" value="P:axonogenesis"/>
    <property type="evidence" value="ECO:0000315"/>
    <property type="project" value="MGI"/>
</dbReference>
<dbReference type="GO" id="GO:0007155">
    <property type="term" value="P:cell adhesion"/>
    <property type="evidence" value="ECO:0000315"/>
    <property type="project" value="MGI"/>
</dbReference>
<dbReference type="GO" id="GO:0007259">
    <property type="term" value="P:cell surface receptor signaling pathway via JAK-STAT"/>
    <property type="evidence" value="ECO:0000315"/>
    <property type="project" value="MGI"/>
</dbReference>
<dbReference type="GO" id="GO:0021813">
    <property type="term" value="P:cell-cell adhesion involved in neuronal-glial interactions involved in cerebral cortex radial glia guided migration"/>
    <property type="evidence" value="ECO:0000315"/>
    <property type="project" value="MGI"/>
</dbReference>
<dbReference type="GO" id="GO:0007417">
    <property type="term" value="P:central nervous system development"/>
    <property type="evidence" value="ECO:0000304"/>
    <property type="project" value="UniProtKB"/>
</dbReference>
<dbReference type="GO" id="GO:0021953">
    <property type="term" value="P:central nervous system neuron differentiation"/>
    <property type="evidence" value="ECO:0000315"/>
    <property type="project" value="MGI"/>
</dbReference>
<dbReference type="GO" id="GO:0021589">
    <property type="term" value="P:cerebellum structural organization"/>
    <property type="evidence" value="ECO:0000315"/>
    <property type="project" value="MGI"/>
</dbReference>
<dbReference type="GO" id="GO:0021795">
    <property type="term" value="P:cerebral cortex cell migration"/>
    <property type="evidence" value="ECO:0000315"/>
    <property type="project" value="MGI"/>
</dbReference>
<dbReference type="GO" id="GO:0021799">
    <property type="term" value="P:cerebral cortex radially oriented cell migration"/>
    <property type="evidence" value="ECO:0000315"/>
    <property type="project" value="UniProtKB"/>
</dbReference>
<dbReference type="GO" id="GO:0016358">
    <property type="term" value="P:dendrite development"/>
    <property type="evidence" value="ECO:0000315"/>
    <property type="project" value="MGI"/>
</dbReference>
<dbReference type="GO" id="GO:0051645">
    <property type="term" value="P:Golgi localization"/>
    <property type="evidence" value="ECO:0000315"/>
    <property type="project" value="MGI"/>
</dbReference>
<dbReference type="GO" id="GO:0021766">
    <property type="term" value="P:hippocampus development"/>
    <property type="evidence" value="ECO:0000315"/>
    <property type="project" value="MGI"/>
</dbReference>
<dbReference type="GO" id="GO:0035556">
    <property type="term" value="P:intracellular signal transduction"/>
    <property type="evidence" value="ECO:0000304"/>
    <property type="project" value="UniProtKB"/>
</dbReference>
<dbReference type="GO" id="GO:0097477">
    <property type="term" value="P:lateral motor column neuron migration"/>
    <property type="evidence" value="ECO:0000315"/>
    <property type="project" value="UniProtKB"/>
</dbReference>
<dbReference type="GO" id="GO:0097475">
    <property type="term" value="P:motor neuron migration"/>
    <property type="evidence" value="ECO:0000315"/>
    <property type="project" value="MGI"/>
</dbReference>
<dbReference type="GO" id="GO:0048712">
    <property type="term" value="P:negative regulation of astrocyte differentiation"/>
    <property type="evidence" value="ECO:0000315"/>
    <property type="project" value="MGI"/>
</dbReference>
<dbReference type="GO" id="GO:0050771">
    <property type="term" value="P:negative regulation of axonogenesis"/>
    <property type="evidence" value="ECO:0000315"/>
    <property type="project" value="MGI"/>
</dbReference>
<dbReference type="GO" id="GO:0007162">
    <property type="term" value="P:negative regulation of cell adhesion"/>
    <property type="evidence" value="ECO:0000315"/>
    <property type="project" value="MGI"/>
</dbReference>
<dbReference type="GO" id="GO:0046426">
    <property type="term" value="P:negative regulation of receptor signaling pathway via JAK-STAT"/>
    <property type="evidence" value="ECO:0000315"/>
    <property type="project" value="MGI"/>
</dbReference>
<dbReference type="GO" id="GO:0007399">
    <property type="term" value="P:nervous system development"/>
    <property type="evidence" value="ECO:0000303"/>
    <property type="project" value="UniProtKB"/>
</dbReference>
<dbReference type="GO" id="GO:0030182">
    <property type="term" value="P:neuron differentiation"/>
    <property type="evidence" value="ECO:0000315"/>
    <property type="project" value="MGI"/>
</dbReference>
<dbReference type="GO" id="GO:0001764">
    <property type="term" value="P:neuron migration"/>
    <property type="evidence" value="ECO:0000315"/>
    <property type="project" value="UniProtKB"/>
</dbReference>
<dbReference type="GO" id="GO:0045666">
    <property type="term" value="P:positive regulation of neuron differentiation"/>
    <property type="evidence" value="ECO:0000315"/>
    <property type="project" value="MGI"/>
</dbReference>
<dbReference type="GO" id="GO:0021942">
    <property type="term" value="P:radial glia guided migration of Purkinje cell"/>
    <property type="evidence" value="ECO:0000315"/>
    <property type="project" value="UniProtKB"/>
</dbReference>
<dbReference type="GO" id="GO:0140650">
    <property type="term" value="P:radial glia-guided pyramidal neuron migration"/>
    <property type="evidence" value="ECO:0000315"/>
    <property type="project" value="MGI"/>
</dbReference>
<dbReference type="GO" id="GO:0038026">
    <property type="term" value="P:reelin-mediated signaling pathway"/>
    <property type="evidence" value="ECO:0000315"/>
    <property type="project" value="UniProtKB"/>
</dbReference>
<dbReference type="GO" id="GO:0090128">
    <property type="term" value="P:regulation of synapse maturation"/>
    <property type="evidence" value="ECO:0000314"/>
    <property type="project" value="SynGO"/>
</dbReference>
<dbReference type="GO" id="GO:0007264">
    <property type="term" value="P:small GTPase-mediated signal transduction"/>
    <property type="evidence" value="ECO:0000315"/>
    <property type="project" value="MGI"/>
</dbReference>
<dbReference type="GO" id="GO:0021517">
    <property type="term" value="P:ventral spinal cord development"/>
    <property type="evidence" value="ECO:0000270"/>
    <property type="project" value="UniProtKB"/>
</dbReference>
<dbReference type="CDD" id="cd01215">
    <property type="entry name" value="PTB_Dab"/>
    <property type="match status" value="1"/>
</dbReference>
<dbReference type="FunFam" id="2.30.29.30:FF:000035">
    <property type="entry name" value="Disabled homolog 2 isoform 1"/>
    <property type="match status" value="1"/>
</dbReference>
<dbReference type="Gene3D" id="2.30.29.30">
    <property type="entry name" value="Pleckstrin-homology domain (PH domain)/Phosphotyrosine-binding domain (PTB)"/>
    <property type="match status" value="1"/>
</dbReference>
<dbReference type="IDEAL" id="IID50323"/>
<dbReference type="InterPro" id="IPR048559">
    <property type="entry name" value="DAB1/2_SBM"/>
</dbReference>
<dbReference type="InterPro" id="IPR048561">
    <property type="entry name" value="Dab_PTB"/>
</dbReference>
<dbReference type="InterPro" id="IPR011993">
    <property type="entry name" value="PH-like_dom_sf"/>
</dbReference>
<dbReference type="InterPro" id="IPR006020">
    <property type="entry name" value="PTB/PI_dom"/>
</dbReference>
<dbReference type="PANTHER" id="PTHR47695:SF4">
    <property type="entry name" value="DISABLED HOMOLOG 1"/>
    <property type="match status" value="1"/>
</dbReference>
<dbReference type="PANTHER" id="PTHR47695">
    <property type="entry name" value="PID DOMAIN-CONTAINING PROTEIN"/>
    <property type="match status" value="1"/>
</dbReference>
<dbReference type="Pfam" id="PF21792">
    <property type="entry name" value="DAB2_SBM"/>
    <property type="match status" value="1"/>
</dbReference>
<dbReference type="Pfam" id="PF00640">
    <property type="entry name" value="PID"/>
    <property type="match status" value="1"/>
</dbReference>
<dbReference type="SMART" id="SM00462">
    <property type="entry name" value="PTB"/>
    <property type="match status" value="1"/>
</dbReference>
<dbReference type="SUPFAM" id="SSF50729">
    <property type="entry name" value="PH domain-like"/>
    <property type="match status" value="1"/>
</dbReference>
<dbReference type="PROSITE" id="PS01179">
    <property type="entry name" value="PID"/>
    <property type="match status" value="1"/>
</dbReference>
<evidence type="ECO:0000250" key="1">
    <source>
        <dbReference type="UniProtKB" id="O75553"/>
    </source>
</evidence>
<evidence type="ECO:0000250" key="2">
    <source>
        <dbReference type="UniProtKB" id="Q8CJH2"/>
    </source>
</evidence>
<evidence type="ECO:0000255" key="3">
    <source>
        <dbReference type="PROSITE-ProRule" id="PRU00148"/>
    </source>
</evidence>
<evidence type="ECO:0000256" key="4">
    <source>
        <dbReference type="SAM" id="MobiDB-lite"/>
    </source>
</evidence>
<evidence type="ECO:0000269" key="5">
    <source>
    </source>
</evidence>
<evidence type="ECO:0000269" key="6">
    <source>
    </source>
</evidence>
<evidence type="ECO:0000269" key="7">
    <source>
    </source>
</evidence>
<evidence type="ECO:0000269" key="8">
    <source>
    </source>
</evidence>
<evidence type="ECO:0000269" key="9">
    <source>
    </source>
</evidence>
<evidence type="ECO:0000269" key="10">
    <source>
    </source>
</evidence>
<evidence type="ECO:0000269" key="11">
    <source>
    </source>
</evidence>
<evidence type="ECO:0000269" key="12">
    <source>
    </source>
</evidence>
<evidence type="ECO:0000269" key="13">
    <source>
    </source>
</evidence>
<evidence type="ECO:0000269" key="14">
    <source>
    </source>
</evidence>
<evidence type="ECO:0000269" key="15">
    <source>
    </source>
</evidence>
<evidence type="ECO:0000269" key="16">
    <source>
    </source>
</evidence>
<evidence type="ECO:0000269" key="17">
    <source>
    </source>
</evidence>
<evidence type="ECO:0000269" key="18">
    <source>
    </source>
</evidence>
<evidence type="ECO:0000303" key="19">
    <source>
    </source>
</evidence>
<evidence type="ECO:0000303" key="20">
    <source>
    </source>
</evidence>
<evidence type="ECO:0000305" key="21"/>
<evidence type="ECO:0000312" key="22">
    <source>
        <dbReference type="MGI" id="MGI:108554"/>
    </source>
</evidence>
<evidence type="ECO:0007829" key="23">
    <source>
        <dbReference type="PDB" id="1NTV"/>
    </source>
</evidence>
<protein>
    <recommendedName>
        <fullName evidence="21">Disabled homolog 1</fullName>
        <shortName evidence="20">mDab1</shortName>
    </recommendedName>
</protein>
<keyword id="KW-0002">3D-structure</keyword>
<keyword id="KW-0025">Alternative splicing</keyword>
<keyword id="KW-0963">Cytoplasm</keyword>
<keyword id="KW-0217">Developmental protein</keyword>
<keyword id="KW-0221">Differentiation</keyword>
<keyword id="KW-0524">Neurogenesis</keyword>
<keyword id="KW-0597">Phosphoprotein</keyword>
<keyword id="KW-1185">Reference proteome</keyword>
<keyword id="KW-0832">Ubl conjugation</keyword>
<reference key="1">
    <citation type="journal article" date="1997" name="EMBO J.">
        <title>Mouse disabled (mDab1): a Src binding protein implicated in neuronal development.</title>
        <authorList>
            <person name="Howell B.W."/>
            <person name="Gertler F.B."/>
            <person name="Cooper J.A."/>
        </authorList>
    </citation>
    <scope>NUCLEOTIDE SEQUENCE [GENOMIC DNA / MRNA] (ISOFORMS DAB217; DAB271 AND DAB555)</scope>
    <scope>FUNCTION</scope>
    <scope>SUBUNIT</scope>
    <scope>TISSUE SPECIFICITY</scope>
    <source>
        <tissue>Embryonic brain</tissue>
    </source>
</reference>
<reference key="2">
    <citation type="journal article" date="2005" name="Science">
        <title>The transcriptional landscape of the mammalian genome.</title>
        <authorList>
            <person name="Carninci P."/>
            <person name="Kasukawa T."/>
            <person name="Katayama S."/>
            <person name="Gough J."/>
            <person name="Frith M.C."/>
            <person name="Maeda N."/>
            <person name="Oyama R."/>
            <person name="Ravasi T."/>
            <person name="Lenhard B."/>
            <person name="Wells C."/>
            <person name="Kodzius R."/>
            <person name="Shimokawa K."/>
            <person name="Bajic V.B."/>
            <person name="Brenner S.E."/>
            <person name="Batalov S."/>
            <person name="Forrest A.R."/>
            <person name="Zavolan M."/>
            <person name="Davis M.J."/>
            <person name="Wilming L.G."/>
            <person name="Aidinis V."/>
            <person name="Allen J.E."/>
            <person name="Ambesi-Impiombato A."/>
            <person name="Apweiler R."/>
            <person name="Aturaliya R.N."/>
            <person name="Bailey T.L."/>
            <person name="Bansal M."/>
            <person name="Baxter L."/>
            <person name="Beisel K.W."/>
            <person name="Bersano T."/>
            <person name="Bono H."/>
            <person name="Chalk A.M."/>
            <person name="Chiu K.P."/>
            <person name="Choudhary V."/>
            <person name="Christoffels A."/>
            <person name="Clutterbuck D.R."/>
            <person name="Crowe M.L."/>
            <person name="Dalla E."/>
            <person name="Dalrymple B.P."/>
            <person name="de Bono B."/>
            <person name="Della Gatta G."/>
            <person name="di Bernardo D."/>
            <person name="Down T."/>
            <person name="Engstrom P."/>
            <person name="Fagiolini M."/>
            <person name="Faulkner G."/>
            <person name="Fletcher C.F."/>
            <person name="Fukushima T."/>
            <person name="Furuno M."/>
            <person name="Futaki S."/>
            <person name="Gariboldi M."/>
            <person name="Georgii-Hemming P."/>
            <person name="Gingeras T.R."/>
            <person name="Gojobori T."/>
            <person name="Green R.E."/>
            <person name="Gustincich S."/>
            <person name="Harbers M."/>
            <person name="Hayashi Y."/>
            <person name="Hensch T.K."/>
            <person name="Hirokawa N."/>
            <person name="Hill D."/>
            <person name="Huminiecki L."/>
            <person name="Iacono M."/>
            <person name="Ikeo K."/>
            <person name="Iwama A."/>
            <person name="Ishikawa T."/>
            <person name="Jakt M."/>
            <person name="Kanapin A."/>
            <person name="Katoh M."/>
            <person name="Kawasawa Y."/>
            <person name="Kelso J."/>
            <person name="Kitamura H."/>
            <person name="Kitano H."/>
            <person name="Kollias G."/>
            <person name="Krishnan S.P."/>
            <person name="Kruger A."/>
            <person name="Kummerfeld S.K."/>
            <person name="Kurochkin I.V."/>
            <person name="Lareau L.F."/>
            <person name="Lazarevic D."/>
            <person name="Lipovich L."/>
            <person name="Liu J."/>
            <person name="Liuni S."/>
            <person name="McWilliam S."/>
            <person name="Madan Babu M."/>
            <person name="Madera M."/>
            <person name="Marchionni L."/>
            <person name="Matsuda H."/>
            <person name="Matsuzawa S."/>
            <person name="Miki H."/>
            <person name="Mignone F."/>
            <person name="Miyake S."/>
            <person name="Morris K."/>
            <person name="Mottagui-Tabar S."/>
            <person name="Mulder N."/>
            <person name="Nakano N."/>
            <person name="Nakauchi H."/>
            <person name="Ng P."/>
            <person name="Nilsson R."/>
            <person name="Nishiguchi S."/>
            <person name="Nishikawa S."/>
            <person name="Nori F."/>
            <person name="Ohara O."/>
            <person name="Okazaki Y."/>
            <person name="Orlando V."/>
            <person name="Pang K.C."/>
            <person name="Pavan W.J."/>
            <person name="Pavesi G."/>
            <person name="Pesole G."/>
            <person name="Petrovsky N."/>
            <person name="Piazza S."/>
            <person name="Reed J."/>
            <person name="Reid J.F."/>
            <person name="Ring B.Z."/>
            <person name="Ringwald M."/>
            <person name="Rost B."/>
            <person name="Ruan Y."/>
            <person name="Salzberg S.L."/>
            <person name="Sandelin A."/>
            <person name="Schneider C."/>
            <person name="Schoenbach C."/>
            <person name="Sekiguchi K."/>
            <person name="Semple C.A."/>
            <person name="Seno S."/>
            <person name="Sessa L."/>
            <person name="Sheng Y."/>
            <person name="Shibata Y."/>
            <person name="Shimada H."/>
            <person name="Shimada K."/>
            <person name="Silva D."/>
            <person name="Sinclair B."/>
            <person name="Sperling S."/>
            <person name="Stupka E."/>
            <person name="Sugiura K."/>
            <person name="Sultana R."/>
            <person name="Takenaka Y."/>
            <person name="Taki K."/>
            <person name="Tammoja K."/>
            <person name="Tan S.L."/>
            <person name="Tang S."/>
            <person name="Taylor M.S."/>
            <person name="Tegner J."/>
            <person name="Teichmann S.A."/>
            <person name="Ueda H.R."/>
            <person name="van Nimwegen E."/>
            <person name="Verardo R."/>
            <person name="Wei C.L."/>
            <person name="Yagi K."/>
            <person name="Yamanishi H."/>
            <person name="Zabarovsky E."/>
            <person name="Zhu S."/>
            <person name="Zimmer A."/>
            <person name="Hide W."/>
            <person name="Bult C."/>
            <person name="Grimmond S.M."/>
            <person name="Teasdale R.D."/>
            <person name="Liu E.T."/>
            <person name="Brusic V."/>
            <person name="Quackenbush J."/>
            <person name="Wahlestedt C."/>
            <person name="Mattick J.S."/>
            <person name="Hume D.A."/>
            <person name="Kai C."/>
            <person name="Sasaki D."/>
            <person name="Tomaru Y."/>
            <person name="Fukuda S."/>
            <person name="Kanamori-Katayama M."/>
            <person name="Suzuki M."/>
            <person name="Aoki J."/>
            <person name="Arakawa T."/>
            <person name="Iida J."/>
            <person name="Imamura K."/>
            <person name="Itoh M."/>
            <person name="Kato T."/>
            <person name="Kawaji H."/>
            <person name="Kawagashira N."/>
            <person name="Kawashima T."/>
            <person name="Kojima M."/>
            <person name="Kondo S."/>
            <person name="Konno H."/>
            <person name="Nakano K."/>
            <person name="Ninomiya N."/>
            <person name="Nishio T."/>
            <person name="Okada M."/>
            <person name="Plessy C."/>
            <person name="Shibata K."/>
            <person name="Shiraki T."/>
            <person name="Suzuki S."/>
            <person name="Tagami M."/>
            <person name="Waki K."/>
            <person name="Watahiki A."/>
            <person name="Okamura-Oho Y."/>
            <person name="Suzuki H."/>
            <person name="Kawai J."/>
            <person name="Hayashizaki Y."/>
        </authorList>
    </citation>
    <scope>NUCLEOTIDE SEQUENCE [LARGE SCALE MRNA] (ISOFORM DAB197)</scope>
    <source>
        <strain>C57BL/6J</strain>
        <tissue>Testis</tissue>
    </source>
</reference>
<reference key="3">
    <citation type="journal article" date="2009" name="PLoS Biol.">
        <title>Lineage-specific biology revealed by a finished genome assembly of the mouse.</title>
        <authorList>
            <person name="Church D.M."/>
            <person name="Goodstadt L."/>
            <person name="Hillier L.W."/>
            <person name="Zody M.C."/>
            <person name="Goldstein S."/>
            <person name="She X."/>
            <person name="Bult C.J."/>
            <person name="Agarwala R."/>
            <person name="Cherry J.L."/>
            <person name="DiCuccio M."/>
            <person name="Hlavina W."/>
            <person name="Kapustin Y."/>
            <person name="Meric P."/>
            <person name="Maglott D."/>
            <person name="Birtle Z."/>
            <person name="Marques A.C."/>
            <person name="Graves T."/>
            <person name="Zhou S."/>
            <person name="Teague B."/>
            <person name="Potamousis K."/>
            <person name="Churas C."/>
            <person name="Place M."/>
            <person name="Herschleb J."/>
            <person name="Runnheim R."/>
            <person name="Forrest D."/>
            <person name="Amos-Landgraf J."/>
            <person name="Schwartz D.C."/>
            <person name="Cheng Z."/>
            <person name="Lindblad-Toh K."/>
            <person name="Eichler E.E."/>
            <person name="Ponting C.P."/>
        </authorList>
    </citation>
    <scope>NUCLEOTIDE SEQUENCE [LARGE SCALE GENOMIC DNA]</scope>
    <source>
        <strain>C57BL/6J</strain>
    </source>
</reference>
<reference key="4">
    <citation type="journal article" date="1997" name="Nature">
        <title>Scrambler and yotari disrupt the disabled gene and produce a reeler-like phenotype in mice.</title>
        <authorList>
            <person name="Sheldon M."/>
            <person name="Rice D.S."/>
            <person name="D'Arcangelo G."/>
            <person name="Yoneshima H."/>
            <person name="Nakajima K."/>
            <person name="Mikoshiba K."/>
            <person name="Howell B.W."/>
            <person name="Cooper J.A."/>
            <person name="Goldowitz D."/>
            <person name="Curran T."/>
        </authorList>
    </citation>
    <scope>FUNCTION</scope>
    <scope>TISSUE SPECIFICITY</scope>
    <scope>DISRUPTION PHENOTYPE</scope>
</reference>
<reference key="5">
    <citation type="journal article" date="1997" name="Nature">
        <title>Neuronal position in the developing brain is regulated by mouse disabled-1.</title>
        <authorList>
            <person name="Howell B.W."/>
            <person name="Hawkes R."/>
            <person name="Soriano P."/>
            <person name="Cooper J.A."/>
        </authorList>
    </citation>
    <scope>FUNCTION</scope>
    <scope>SUBCELLULAR LOCATION</scope>
    <scope>TISSUE SPECIFICITY</scope>
    <scope>DISRUPTION PHENOTYPE</scope>
</reference>
<reference key="6">
    <citation type="journal article" date="2000" name="Curr. Biol.">
        <title>Dab1 tyrosine phosphorylation sites relay positional signals during mouse brain development.</title>
        <authorList>
            <person name="Howell B.W."/>
            <person name="Herrick T.M."/>
            <person name="Hildebrand J.D."/>
            <person name="Zhang Y."/>
            <person name="Cooper J.A."/>
        </authorList>
    </citation>
    <scope>PHOSPHORYLATION AT TYR-198 AND TYR-232</scope>
    <scope>MUTAGENESIS OF TYR-185; TYR-198; TYR-200; TYR-220 AND TYR-232</scope>
</reference>
<reference key="7">
    <citation type="journal article" date="2001" name="J. Biol. Chem.">
        <title>Identification of reelin-induced sites of tyrosyl phosphorylation on disabled 1.</title>
        <authorList>
            <person name="Keshvara L."/>
            <person name="Benhayon D."/>
            <person name="Magdaleno S."/>
            <person name="Curran T."/>
        </authorList>
    </citation>
    <scope>PHOSPHORYLATION AT TYR-198 AND TYR-220</scope>
</reference>
<reference key="8">
    <citation type="journal article" date="2002" name="J. Neurosci.">
        <title>Cyclin-dependent kinase 5 phosphorylates disabled 1 independently of reelin signaling.</title>
        <authorList>
            <person name="Keshvara L."/>
            <person name="Magdaleno S."/>
            <person name="Benhayon D."/>
            <person name="Curran T."/>
        </authorList>
    </citation>
    <scope>PHOSPHORYLATION AT SER-524</scope>
</reference>
<reference key="9">
    <citation type="journal article" date="2003" name="Biochem. Biophys. Res. Commun.">
        <title>Inhibition of ubiquitin ligase Siah-1A by disabled-1.</title>
        <authorList>
            <person name="Park T.-J."/>
            <person name="Hamanaka H."/>
            <person name="Ohshima T."/>
            <person name="Watanabe N."/>
            <person name="Mikoshiba K."/>
            <person name="Nukina N."/>
        </authorList>
    </citation>
    <scope>INTERACTION WITH SIAH1</scope>
</reference>
<reference key="10">
    <citation type="journal article" date="2003" name="Curr. Biol.">
        <title>Fyn tyrosine kinase is a critical regulator of disabled-1 during brain development.</title>
        <authorList>
            <person name="Arnaud L."/>
            <person name="Ballif B.A."/>
            <person name="Foerster E."/>
            <person name="Cooper J.A."/>
        </authorList>
    </citation>
    <scope>FUNCTION</scope>
    <scope>PHOSPHORYLATION</scope>
</reference>
<reference key="11">
    <citation type="journal article" date="2004" name="Curr. Biol.">
        <title>Activation of a Dab1/CrkL/C3G/Rap1 pathway in Reelin-stimulated neurons.</title>
        <authorList>
            <person name="Ballif B.A."/>
            <person name="Arnaud L."/>
            <person name="Arthur W.T."/>
            <person name="Guris D."/>
            <person name="Imamoto A."/>
            <person name="Cooper J.A."/>
        </authorList>
    </citation>
    <scope>PHOSPHORYLATION AT TYR-220 AND TYR-232</scope>
    <scope>INTERACTION WITH CRK AND CRKL</scope>
    <scope>MUTAGENESIS OF TYR-220 AND TYR-232</scope>
</reference>
<reference key="12">
    <citation type="journal article" date="2007" name="Genes Dev.">
        <title>Cullin 5 regulates Dab1 protein levels and neuron positioning during cortical development.</title>
        <authorList>
            <person name="Feng L."/>
            <person name="Allen N.S."/>
            <person name="Simo S."/>
            <person name="Cooper J.A."/>
        </authorList>
    </citation>
    <scope>UBIQUITINATION</scope>
</reference>
<reference key="13">
    <citation type="journal article" date="2013" name="Dev. Cell">
        <title>Rbx2 regulates neuronal migration through different cullin 5-RING ligase adaptors.</title>
        <authorList>
            <person name="Simo S."/>
            <person name="Cooper J.A."/>
        </authorList>
    </citation>
    <scope>UBIQUITINATION</scope>
</reference>
<reference key="14">
    <citation type="journal article" date="2018" name="Development">
        <title>RBX2 maintains final retinal cell position in a DAB1-dependent and -independent fashion.</title>
        <authorList>
            <person name="Fairchild C.L."/>
            <person name="Hino K."/>
            <person name="Han J.S."/>
            <person name="Miltner A.M."/>
            <person name="Peinado Allina G."/>
            <person name="Brown C.E."/>
            <person name="Burns M.E."/>
            <person name="La Torre A."/>
            <person name="Simo S."/>
        </authorList>
    </citation>
    <scope>UBIQUITINATION</scope>
</reference>
<reference key="15">
    <citation type="journal article" date="2023" name="Cereb. Cortex">
        <title>The ZSWIM8 ubiquitin ligase regulates neurodevelopment by guarding the protein quality of intrinsically disordered Dab1.</title>
        <authorList>
            <person name="Wang G."/>
            <person name="Lei J."/>
            <person name="Wang Y."/>
            <person name="Yu J."/>
            <person name="He Y."/>
            <person name="Zhao W."/>
            <person name="Hu Z."/>
            <person name="Xu Z."/>
            <person name="Jin Y."/>
            <person name="Gu Y."/>
            <person name="Guo X."/>
            <person name="Yang B."/>
            <person name="Gao Z."/>
            <person name="Wang Z."/>
        </authorList>
    </citation>
    <scope>INTERACTION WITH ZSWIM8</scope>
    <scope>UBIQUITINATION</scope>
</reference>
<reference key="16">
    <citation type="journal article" date="2003" name="J. Biol. Chem.">
        <title>Crystal structures of the Dab homology domains of mouse disabled 1 and 2.</title>
        <authorList>
            <person name="Yun M."/>
            <person name="Keshvara L."/>
            <person name="Park C.G."/>
            <person name="Zhang Y.M."/>
            <person name="Dickerson J.B."/>
            <person name="Zheng J."/>
            <person name="Rock C.O."/>
            <person name="Curran T."/>
            <person name="Park H.W."/>
        </authorList>
    </citation>
    <scope>X-RAY CRYSTALLOGRAPHY (2.3 ANGSTROMS) OF 25-183</scope>
    <scope>INTERACTION WITH PHOSPHATIDYLINOSITIDES AND APLP1</scope>
    <scope>DOMAIN</scope>
    <scope>MUTAGENESIS OF LYS-45; LYS-82; SER-114; HIS-136 AND PHE-158</scope>
</reference>
<reference key="17">
    <citation type="journal article" date="2003" name="Structure">
        <title>Origins of peptide selectivity and phosphoinositide binding revealed by structures of disabled-1 PTB domain complexes.</title>
        <authorList>
            <person name="Stolt P.C."/>
            <person name="Jeon H."/>
            <person name="Song H.K."/>
            <person name="Herz J."/>
            <person name="Eck M.J."/>
            <person name="Blacklow S.C."/>
        </authorList>
    </citation>
    <scope>X-RAY CRYSTALLOGRAPHY (1.9 ANGSTROMS) OF 23-174</scope>
    <scope>INTERACTION WITH LRP8 AND VLDLR</scope>
    <scope>DOMAIN</scope>
</reference>
<feature type="chain" id="PRO_0000079769" description="Disabled homolog 1">
    <location>
        <begin position="1"/>
        <end position="588"/>
    </location>
</feature>
<feature type="domain" description="PID" evidence="3">
    <location>
        <begin position="36"/>
        <end position="189"/>
    </location>
</feature>
<feature type="region of interest" description="Disordered" evidence="4">
    <location>
        <begin position="1"/>
        <end position="26"/>
    </location>
</feature>
<feature type="region of interest" description="Disordered" evidence="4">
    <location>
        <begin position="224"/>
        <end position="243"/>
    </location>
</feature>
<feature type="region of interest" description="Disordered" evidence="4">
    <location>
        <begin position="420"/>
        <end position="444"/>
    </location>
</feature>
<feature type="region of interest" description="Disordered" evidence="4">
    <location>
        <begin position="451"/>
        <end position="470"/>
    </location>
</feature>
<feature type="region of interest" description="Disordered" evidence="4">
    <location>
        <begin position="502"/>
        <end position="588"/>
    </location>
</feature>
<feature type="compositionally biased region" description="Basic and acidic residues" evidence="4">
    <location>
        <begin position="15"/>
        <end position="26"/>
    </location>
</feature>
<feature type="compositionally biased region" description="Polar residues" evidence="4">
    <location>
        <begin position="424"/>
        <end position="436"/>
    </location>
</feature>
<feature type="compositionally biased region" description="Low complexity" evidence="4">
    <location>
        <begin position="503"/>
        <end position="512"/>
    </location>
</feature>
<feature type="compositionally biased region" description="Low complexity" evidence="4">
    <location>
        <begin position="523"/>
        <end position="534"/>
    </location>
</feature>
<feature type="compositionally biased region" description="Acidic residues" evidence="4">
    <location>
        <begin position="537"/>
        <end position="546"/>
    </location>
</feature>
<feature type="modified residue" description="Phosphotyrosine" evidence="5 6">
    <location>
        <position position="198"/>
    </location>
</feature>
<feature type="modified residue" description="Phosphotyrosine" evidence="6 12">
    <location>
        <position position="220"/>
    </location>
</feature>
<feature type="modified residue" description="Phosphotyrosine" evidence="5 12">
    <location>
        <position position="232"/>
    </location>
</feature>
<feature type="modified residue" description="Phosphoserine; by CDK5" evidence="7">
    <location>
        <position position="524"/>
    </location>
</feature>
<feature type="splice variant" id="VSP_026205" description="In isoform DAB197." evidence="19">
    <original>STETELQVAVKTSAKKDSRKKG</original>
    <variation>LC</variation>
    <location>
        <begin position="2"/>
        <end position="23"/>
    </location>
</feature>
<feature type="splice variant" id="VSP_026206" description="In isoform DAB553." evidence="21">
    <location>
        <begin position="187"/>
        <end position="221"/>
    </location>
</feature>
<feature type="splice variant" id="VSP_003841" description="In isoform DAB197 and isoform DAB217." evidence="19 20">
    <original>YIVFEAGHEPIRDPETEE</original>
    <variation>VISEPRQGFACSCEGSFD</variation>
    <location>
        <begin position="200"/>
        <end position="217"/>
    </location>
</feature>
<feature type="splice variant" id="VSP_026208" description="In isoform DAB204." evidence="21">
    <original>YIVFE</original>
    <variation>NLQKN</variation>
    <location>
        <begin position="200"/>
        <end position="204"/>
    </location>
</feature>
<feature type="splice variant" id="VSP_026209" description="In isoform DAB204." evidence="21">
    <location>
        <begin position="205"/>
        <end position="588"/>
    </location>
</feature>
<feature type="splice variant" id="VSP_003842" description="In isoform DAB197 and isoform DAB217." evidence="19 20">
    <location>
        <begin position="218"/>
        <end position="588"/>
    </location>
</feature>
<feature type="splice variant" id="VSP_003843" description="In isoform DAB555 and isoform DAB271." evidence="20">
    <location>
        <begin position="240"/>
        <end position="272"/>
    </location>
</feature>
<feature type="splice variant" id="VSP_003844" description="In isoform DAB271." evidence="20">
    <original>AVTQLELFGDMSTPPDITSPPTPATPGDAF</original>
    <variation>SLVQSPAAERAEAESRTGPAEPGSILRPLG</variation>
    <location>
        <begin position="275"/>
        <end position="304"/>
    </location>
</feature>
<feature type="splice variant" id="VSP_003845" description="In isoform DAB271." evidence="20">
    <location>
        <begin position="305"/>
        <end position="588"/>
    </location>
</feature>
<feature type="mutagenesis site" description="Impairs binding to PtdIns(4,5)P2." evidence="11">
    <original>K</original>
    <variation>A</variation>
    <location>
        <position position="45"/>
    </location>
</feature>
<feature type="mutagenesis site" description="Abolishes binding to PtdIns(4,5)P2." evidence="11">
    <original>K</original>
    <variation>A</variation>
    <location>
        <position position="82"/>
    </location>
</feature>
<feature type="mutagenesis site" description="Abolishes interaction with APLP1." evidence="11">
    <original>S</original>
    <variation>T</variation>
    <location>
        <position position="114"/>
    </location>
</feature>
<feature type="mutagenesis site" description="Greatly impairs interaction with APLP1." evidence="11">
    <original>H</original>
    <variation>R</variation>
    <location>
        <position position="136"/>
    </location>
</feature>
<feature type="mutagenesis site" description="Abolishes interaction with APLP1." evidence="11">
    <original>F</original>
    <variation>V</variation>
    <location>
        <position position="158"/>
    </location>
</feature>
<feature type="mutagenesis site" description="Reduces phosphorylation by SRC or downstream kinase; when associated with F-198 and F-200. Abolishes phosphorylation by SRC or downstream kinase; when associated with F-198; F-200; F-220 and F-232." evidence="5">
    <original>Y</original>
    <variation>F</variation>
    <location>
        <position position="185"/>
    </location>
</feature>
<feature type="mutagenesis site" description="Reduces phosphorylation by SRC or downstream kinase; when associated with F-185 and F-200. Abolishes phosphorylation by SRC or downstream kinase; when associated with F-185; F-200; F-220 and F-232." evidence="5">
    <original>Y</original>
    <variation>F</variation>
    <location>
        <position position="198"/>
    </location>
</feature>
<feature type="mutagenesis site" description="Reduces phosphorylation by SRC or downstream kinase; when associated with F-185 and F-198. Abolishes phosphorylation by SRC or downstream kinase; when associated with F-185; F-198; F-220 and F-232." evidence="5">
    <original>Y</original>
    <variation>F</variation>
    <location>
        <position position="200"/>
    </location>
</feature>
<feature type="mutagenesis site" description="Reduces phosphorylation by SRC or downstream kinase; when associated with F-232. Abolishes phosphorylation by SRC or downstream kinase; when associated with F-185; F-198; F-200 and F-232. Abolishes interaction with CRKL SH2 domain; when associated with F-232." evidence="5 12">
    <original>Y</original>
    <variation>F</variation>
    <location>
        <position position="220"/>
    </location>
</feature>
<feature type="mutagenesis site" description="Reduces phosphorylation by SRC or downstream kinase; when associated with F-220. Abolishes phosphorylation by SRC or downstream kinase; when associated with F-185; F-198; F-200 and F-220. Abolishes interaction with CRKL SH2 domain; when associated with F-220." evidence="5 12">
    <original>Y</original>
    <variation>F</variation>
    <location>
        <position position="232"/>
    </location>
</feature>
<feature type="sequence conflict" description="In Ref. 2; BAB24163." evidence="21" ref="2">
    <original>A</original>
    <variation>R</variation>
    <location>
        <position position="29"/>
    </location>
</feature>
<feature type="sequence conflict" description="In Ref. 3; CAM17685/CAM26758." evidence="21" ref="3">
    <original>P</original>
    <variation>PVS</variation>
    <location>
        <position position="239"/>
    </location>
</feature>
<feature type="sequence conflict" description="In Ref. 3; CAM17685/CAM26758." evidence="21" ref="3">
    <original>E</original>
    <variation>D</variation>
    <location>
        <position position="248"/>
    </location>
</feature>
<feature type="helix" evidence="23">
    <location>
        <begin position="28"/>
        <end position="35"/>
    </location>
</feature>
<feature type="strand" evidence="23">
    <location>
        <begin position="40"/>
        <end position="51"/>
    </location>
</feature>
<feature type="strand" evidence="23">
    <location>
        <begin position="53"/>
        <end position="55"/>
    </location>
</feature>
<feature type="helix" evidence="23">
    <location>
        <begin position="58"/>
        <end position="76"/>
    </location>
</feature>
<feature type="turn" evidence="23">
    <location>
        <begin position="77"/>
        <end position="79"/>
    </location>
</feature>
<feature type="strand" evidence="23">
    <location>
        <begin position="83"/>
        <end position="90"/>
    </location>
</feature>
<feature type="strand" evidence="23">
    <location>
        <begin position="93"/>
        <end position="98"/>
    </location>
</feature>
<feature type="turn" evidence="23">
    <location>
        <begin position="99"/>
        <end position="101"/>
    </location>
</feature>
<feature type="strand" evidence="23">
    <location>
        <begin position="104"/>
        <end position="108"/>
    </location>
</feature>
<feature type="helix" evidence="23">
    <location>
        <begin position="110"/>
        <end position="112"/>
    </location>
</feature>
<feature type="strand" evidence="23">
    <location>
        <begin position="113"/>
        <end position="118"/>
    </location>
</feature>
<feature type="strand" evidence="23">
    <location>
        <begin position="125"/>
        <end position="132"/>
    </location>
</feature>
<feature type="strand" evidence="23">
    <location>
        <begin position="137"/>
        <end position="145"/>
    </location>
</feature>
<feature type="helix" evidence="23">
    <location>
        <begin position="148"/>
        <end position="166"/>
    </location>
</feature>
<feature type="helix" evidence="23">
    <location>
        <begin position="170"/>
        <end position="173"/>
    </location>
</feature>
<organism>
    <name type="scientific">Mus musculus</name>
    <name type="common">Mouse</name>
    <dbReference type="NCBI Taxonomy" id="10090"/>
    <lineage>
        <taxon>Eukaryota</taxon>
        <taxon>Metazoa</taxon>
        <taxon>Chordata</taxon>
        <taxon>Craniata</taxon>
        <taxon>Vertebrata</taxon>
        <taxon>Euteleostomi</taxon>
        <taxon>Mammalia</taxon>
        <taxon>Eutheria</taxon>
        <taxon>Euarchontoglires</taxon>
        <taxon>Glires</taxon>
        <taxon>Rodentia</taxon>
        <taxon>Myomorpha</taxon>
        <taxon>Muroidea</taxon>
        <taxon>Muridae</taxon>
        <taxon>Murinae</taxon>
        <taxon>Mus</taxon>
        <taxon>Mus</taxon>
    </lineage>
</organism>
<accession>P97318</accession>
<accession>A2A963</accession>
<accession>A2A964</accession>
<accession>A2A965</accession>
<accession>A2A966</accession>
<accession>A2A967</accession>
<accession>A2A970</accession>
<accession>P97316</accession>
<accession>P97317</accession>
<accession>Q9DAP9</accession>
<comment type="function">
    <text evidence="8 16 17 18">Signaling adapter of the reelin-mediated signaling pathway, which regulates the migration and differentiation of postmitotic neurons during brain development (PubMed:12526739, PubMed:9009273, PubMed:9338784, PubMed:9338785). Mediates intracellular transduction of Reelin signaling following reelin (RELN)-binding to its receptor: acts by docking proteins through its phosphotyrosine residues and PID domain (PubMed:12526739, PubMed:9009273, PubMed:9338784, PubMed:9338785).</text>
</comment>
<comment type="subunit">
    <text evidence="1 2 9 10 11 12 16">Associates with the SH2 domains of SRC, FYN and ABL (PubMed:9009273). Interacts (phosphorylated on tyrosine residues) with CRK and CRKL (via respective SH2 domain) (PubMed:15062102). Interacts with SIAH1, LRP8 and VLDLR (PubMed:12646221, PubMed:12737822). Interacts with LRP1 (By similarity). Interacts with APLP1 (via NPXY motif) (PubMed:12826668). Interacts with DAB2IP (By similarity). Interacts with ZSWIM8 (PubMed:35989311).</text>
</comment>
<comment type="interaction">
    <interactant intactId="EBI-81680">
        <id>P97318</id>
    </interactant>
    <interactant intactId="EBI-399929">
        <id>Q03157</id>
        <label>Aplp1</label>
    </interactant>
    <organismsDiffer>false</organismsDiffer>
    <experiments>4</experiments>
</comment>
<comment type="interaction">
    <interactant intactId="EBI-81680">
        <id>P97318</id>
    </interactant>
    <interactant intactId="EBI-78814">
        <id>P12023</id>
        <label>App</label>
    </interactant>
    <organismsDiffer>false</organismsDiffer>
    <experiments>3</experiments>
</comment>
<comment type="interaction">
    <interactant intactId="EBI-81680">
        <id>P97318</id>
    </interactant>
    <interactant intactId="EBI-6306507">
        <id>Q3UHC7</id>
        <label>Dab2ip</label>
    </interactant>
    <organismsDiffer>false</organismsDiffer>
    <experiments>3</experiments>
</comment>
<comment type="interaction">
    <interactant intactId="EBI-81680">
        <id>P97318</id>
    </interactant>
    <interactant intactId="EBI-300955">
        <id>Q91ZX7</id>
        <label>Lrp1</label>
    </interactant>
    <organismsDiffer>false</organismsDiffer>
    <experiments>2</experiments>
</comment>
<comment type="interaction">
    <interactant intactId="EBI-81680">
        <id>P97318</id>
    </interactant>
    <interactant intactId="EBI-300875">
        <id>A2ARV4</id>
        <label>Lrp2</label>
    </interactant>
    <organismsDiffer>false</organismsDiffer>
    <experiments>2</experiments>
</comment>
<comment type="interaction">
    <interactant intactId="EBI-81680">
        <id>P97318</id>
    </interactant>
    <interactant intactId="EBI-399910">
        <id>Q8VHR0</id>
        <label>Pcdh18</label>
    </interactant>
    <organismsDiffer>false</organismsDiffer>
    <experiments>2</experiments>
</comment>
<comment type="interaction">
    <interactant intactId="EBI-81680">
        <id>P97318</id>
    </interactant>
    <interactant intactId="EBI-446761">
        <id>P61092</id>
        <label>Siah1a</label>
    </interactant>
    <organismsDiffer>false</organismsDiffer>
    <experiments>3</experiments>
</comment>
<comment type="subcellular location">
    <subcellularLocation>
        <location evidence="18">Cytoplasm</location>
    </subcellularLocation>
</comment>
<comment type="alternative products">
    <event type="alternative splicing"/>
    <isoform>
        <id>P97318-1</id>
        <name>DAB588</name>
        <sequence type="displayed"/>
    </isoform>
    <isoform>
        <id>P97318-4</id>
        <name>DAB197</name>
        <sequence type="described" ref="VSP_026205 VSP_003841 VSP_003842"/>
    </isoform>
    <isoform>
        <id>P97318-5</id>
        <name>DAB204</name>
        <sequence type="described" ref="VSP_026208 VSP_026209"/>
    </isoform>
    <isoform>
        <id>P97318-6</id>
        <name>DAB217</name>
        <sequence type="described" ref="VSP_003841 VSP_003842"/>
    </isoform>
    <isoform>
        <id>P97318-3</id>
        <name>DAB271</name>
        <sequence type="described" ref="VSP_003843 VSP_003844 VSP_003845"/>
    </isoform>
    <isoform>
        <id>P97318-8</id>
        <name>DAB553</name>
        <sequence type="described" ref="VSP_026206"/>
    </isoform>
    <isoform>
        <id>P97318-2</id>
        <name>DAB555</name>
        <sequence type="described" ref="VSP_003843"/>
    </isoform>
</comment>
<comment type="tissue specificity">
    <text evidence="16 17 18">Expressed mainly in brain (PubMed:9009273, PubMed:9338785). Specifically expressin in cortical neurons (PubMed:9338784, PubMed:9338785).</text>
</comment>
<comment type="domain">
    <text evidence="10 11">The PID domain specifically binds to the Asn-Pro-Xaa-Tyr(P) motif found in many tyrosine-phosphorylated proteins.</text>
</comment>
<comment type="PTM">
    <text evidence="5 6 7 8 12">Phosphorylated by FYN on Tyr-198 and Tyr-220 upon reelin induction in embryonic neurons (PubMed:11279201, PubMed:12526739). Also found phosphorylated on Tyr-232 upon reelin induction (PubMed:15062102). Also phosphorylated on Ser-524 independently of reelin signaling.</text>
</comment>
<comment type="PTM">
    <text evidence="1 13 14 15">Ubiquitinated by various cullin-5-RING E3 ubiquitin-protein ligase complexes (ECS complexes) following ligand-binding and phosphorylation, leading to its degradation (PubMed:17974915, PubMed:24210661, PubMed:29361558). Ubiquitinated by the ECS(SOCS7) complex in the cortical plate of the developing cerebral cortex following ligand-binding and phosphorylation by FYN, leading to its degradation by the proteasome (PubMed:24210661). Recognized by ZSWIM8 through a disorder targets misorder mechanism that eliminates misfolded DAB1 via ubiquitination and proteasomal degradation (By similarity).</text>
</comment>
<comment type="disruption phenotype">
    <text evidence="17 18">Defects in Dab1 are the cause of scrambler and yotari phenotypes, characterized by an abnormal pattern of cerebral cortical lamination and a reduction in cerebellar size, accompanied by a lack of foliation and neural cell ectopia (PubMed:9338784). Mutant mice are normal until 10 days postpartum (P10) but then become ataxic: they tremble, walk with a wide gait, drag their hind limbs, and frequently flip onto their backs (PubMed:9338784, PubMed:9338785). Mice generally die between P20 and P30 (PubMed:9338785). Defects are caused by a widespread misplacement of neurons (PubMed:9338784, PubMed:9338785).</text>
</comment>
<proteinExistence type="evidence at protein level"/>